<keyword id="KW-0963">Cytoplasm</keyword>
<keyword id="KW-0378">Hydrolase</keyword>
<keyword id="KW-1185">Reference proteome</keyword>
<keyword id="KW-0694">RNA-binding</keyword>
<keyword id="KW-0820">tRNA-binding</keyword>
<sequence>MKARVVLQQCLHARLQVKPPDEESEAEWVEVNRGMVIYICFFKGATEDLIPKMVNTLLNVKLCETESGKFTSVLQLPGSVLIVPQATLGGKPKGRGMQYHGNIGKDEGLKLYETFVSLCQSELSSCKNSDILTEVKHGTYGNRQVLKLDTNGPYTHLMEF</sequence>
<dbReference type="EC" id="3.1.1.96" evidence="2"/>
<dbReference type="EMBL" id="BC080214">
    <property type="protein sequence ID" value="AAH80214.1"/>
    <property type="molecule type" value="mRNA"/>
</dbReference>
<dbReference type="RefSeq" id="NP_001004011.1">
    <property type="nucleotide sequence ID" value="NM_001004011.2"/>
</dbReference>
<dbReference type="SMR" id="Q68EL2"/>
<dbReference type="FunCoup" id="Q68EL2">
    <property type="interactions" value="274"/>
</dbReference>
<dbReference type="STRING" id="7955.ENSDARP00000120242"/>
<dbReference type="PaxDb" id="7955-ENSDARP00000120242"/>
<dbReference type="GeneID" id="445510"/>
<dbReference type="KEGG" id="dre:445510"/>
<dbReference type="AGR" id="ZFIN:ZDB-GENE-040822-45"/>
<dbReference type="CTD" id="112487"/>
<dbReference type="ZFIN" id="ZDB-GENE-040822-45">
    <property type="gene designation" value="dtd2"/>
</dbReference>
<dbReference type="eggNOG" id="KOG3323">
    <property type="taxonomic scope" value="Eukaryota"/>
</dbReference>
<dbReference type="InParanoid" id="Q68EL2"/>
<dbReference type="OrthoDB" id="275783at2759"/>
<dbReference type="PhylomeDB" id="Q68EL2"/>
<dbReference type="PRO" id="PR:Q68EL2"/>
<dbReference type="Proteomes" id="UP000000437">
    <property type="component" value="Chromosome 17"/>
</dbReference>
<dbReference type="GO" id="GO:0005737">
    <property type="term" value="C:cytoplasm"/>
    <property type="evidence" value="ECO:0000318"/>
    <property type="project" value="GO_Central"/>
</dbReference>
<dbReference type="GO" id="GO:0106105">
    <property type="term" value="F:Ala-tRNA(Thr) deacylase activity"/>
    <property type="evidence" value="ECO:0000314"/>
    <property type="project" value="UniProtKB"/>
</dbReference>
<dbReference type="GO" id="GO:0051500">
    <property type="term" value="F:D-tyrosyl-tRNA(Tyr) deacylase activity"/>
    <property type="evidence" value="ECO:0000318"/>
    <property type="project" value="GO_Central"/>
</dbReference>
<dbReference type="GO" id="GO:0000049">
    <property type="term" value="F:tRNA binding"/>
    <property type="evidence" value="ECO:0007669"/>
    <property type="project" value="UniProtKB-KW"/>
</dbReference>
<dbReference type="GO" id="GO:0106074">
    <property type="term" value="P:aminoacyl-tRNA metabolism involved in translational fidelity"/>
    <property type="evidence" value="ECO:0000314"/>
    <property type="project" value="UniProtKB"/>
</dbReference>
<dbReference type="GO" id="GO:0006399">
    <property type="term" value="P:tRNA metabolic process"/>
    <property type="evidence" value="ECO:0000318"/>
    <property type="project" value="GO_Central"/>
</dbReference>
<dbReference type="FunFam" id="3.50.80.10:FF:000003">
    <property type="entry name" value="probable D-tyrosyl-tRNA(Tyr) deacylase 2"/>
    <property type="match status" value="1"/>
</dbReference>
<dbReference type="Gene3D" id="3.50.80.10">
    <property type="entry name" value="D-tyrosyl-tRNA(Tyr) deacylase"/>
    <property type="match status" value="1"/>
</dbReference>
<dbReference type="InterPro" id="IPR003732">
    <property type="entry name" value="Daa-tRNA_deacyls_DTD"/>
</dbReference>
<dbReference type="InterPro" id="IPR023509">
    <property type="entry name" value="DTD-like_sf"/>
</dbReference>
<dbReference type="PANTHER" id="PTHR10472:SF1">
    <property type="entry name" value="D-AMINOACYL-TRNA DEACYLASE 2"/>
    <property type="match status" value="1"/>
</dbReference>
<dbReference type="PANTHER" id="PTHR10472">
    <property type="entry name" value="D-TYROSYL-TRNA TYR DEACYLASE"/>
    <property type="match status" value="1"/>
</dbReference>
<dbReference type="Pfam" id="PF02580">
    <property type="entry name" value="Tyr_Deacylase"/>
    <property type="match status" value="1"/>
</dbReference>
<dbReference type="SUPFAM" id="SSF69500">
    <property type="entry name" value="DTD-like"/>
    <property type="match status" value="1"/>
</dbReference>
<organism>
    <name type="scientific">Danio rerio</name>
    <name type="common">Zebrafish</name>
    <name type="synonym">Brachydanio rerio</name>
    <dbReference type="NCBI Taxonomy" id="7955"/>
    <lineage>
        <taxon>Eukaryota</taxon>
        <taxon>Metazoa</taxon>
        <taxon>Chordata</taxon>
        <taxon>Craniata</taxon>
        <taxon>Vertebrata</taxon>
        <taxon>Euteleostomi</taxon>
        <taxon>Actinopterygii</taxon>
        <taxon>Neopterygii</taxon>
        <taxon>Teleostei</taxon>
        <taxon>Ostariophysi</taxon>
        <taxon>Cypriniformes</taxon>
        <taxon>Danionidae</taxon>
        <taxon>Danioninae</taxon>
        <taxon>Danio</taxon>
    </lineage>
</organism>
<gene>
    <name type="primary">dtd2</name>
    <name type="ORF">zgc:100795</name>
</gene>
<name>DTD2_DANRE</name>
<reference key="1">
    <citation type="submission" date="2004-08" db="EMBL/GenBank/DDBJ databases">
        <authorList>
            <consortium name="NIH - Zebrafish Gene Collection (ZGC) project"/>
        </authorList>
    </citation>
    <scope>NUCLEOTIDE SEQUENCE [LARGE SCALE MRNA]</scope>
    <source>
        <tissue>Embryo</tissue>
    </source>
</reference>
<reference key="2">
    <citation type="journal article" date="2018" name="Nat. Commun.">
        <title>A chiral selectivity relaxed paralog of DTD for proofreading tRNA mischarging in Animalia.</title>
        <authorList>
            <person name="Kuncha S.K."/>
            <person name="Mazeed M."/>
            <person name="Singh R."/>
            <person name="Kattula B."/>
            <person name="Routh S.B."/>
            <person name="Sankaranarayanan R."/>
        </authorList>
    </citation>
    <scope>FUNCTION</scope>
    <scope>CATALYTIC ACTIVITY</scope>
</reference>
<feature type="chain" id="PRO_0000254051" description="D-aminoacyl-tRNA deacylase 2">
    <location>
        <begin position="1"/>
        <end position="160"/>
    </location>
</feature>
<feature type="short sequence motif" description="Gly-transPro motif, allows the protein to recognize chirality of D-amino acids" evidence="1">
    <location>
        <begin position="152"/>
        <end position="153"/>
    </location>
</feature>
<accession>Q68EL2</accession>
<evidence type="ECO:0000250" key="1">
    <source>
        <dbReference type="UniProtKB" id="Q8BHA3"/>
    </source>
</evidence>
<evidence type="ECO:0000269" key="2">
    <source>
    </source>
</evidence>
<evidence type="ECO:0000303" key="3">
    <source>
    </source>
</evidence>
<evidence type="ECO:0000305" key="4"/>
<evidence type="ECO:0000305" key="5">
    <source>
    </source>
</evidence>
<proteinExistence type="evidence at protein level"/>
<comment type="function">
    <text evidence="1 2">Deacylates mischarged D-aminoacyl-tRNAs (By similarity). Also deacylates mischarged glycyl-tRNA(Ala), protecting cells against glycine mischarging by AlaRS (By similarity). Probably acts by rejecting L-amino acids from its binding site rather than specific recognition of D-amino acids (By similarity). Catalyzes the hydrolysis of D-tyrosyl-tRNA(Tyr), has no activity on correctly charged L-tyrosyl-tRNA(Tyr) (By similarity). By recycling D-aminoacyl-tRNA to D-amino acids and free tRNA molecules, this enzyme counteracts the toxicity associated with the formation of D-aminoacyl-tRNA entities in vivo and helps enforce protein L-homochirality. In contrast to DTD1, deacylates L-Ala mischarged on tRNA(Thr)(G4.U69) by alanine-tRNA ligase AARS (PubMed:29410408). Can deacylate L-Ala due to a relaxed specificity for substrate chirality caused by the trans conformation of the Gly-Pro motif in the active site (PubMed:29410408). Also hydrolyzes correctly charged, achiral, glycyl-tRNA(Gly) in vitro, although in vivo eef1a1a/EF-Tu may protect cognate achiral glycyl-tRNA(Gly) from DTD2-mediated deacetylation (By similarity).</text>
</comment>
<comment type="catalytic activity">
    <reaction evidence="2">
        <text>a D-aminoacyl-tRNA + H2O = a tRNA + a D-alpha-amino acid + H(+)</text>
        <dbReference type="Rhea" id="RHEA:13953"/>
        <dbReference type="Rhea" id="RHEA-COMP:10123"/>
        <dbReference type="Rhea" id="RHEA-COMP:10124"/>
        <dbReference type="ChEBI" id="CHEBI:15377"/>
        <dbReference type="ChEBI" id="CHEBI:15378"/>
        <dbReference type="ChEBI" id="CHEBI:59871"/>
        <dbReference type="ChEBI" id="CHEBI:78442"/>
        <dbReference type="ChEBI" id="CHEBI:79333"/>
        <dbReference type="EC" id="3.1.1.96"/>
    </reaction>
</comment>
<comment type="catalytic activity">
    <reaction evidence="2">
        <text>glycyl-tRNA(Ala) + H2O = tRNA(Ala) + glycine + H(+)</text>
        <dbReference type="Rhea" id="RHEA:53744"/>
        <dbReference type="Rhea" id="RHEA-COMP:9657"/>
        <dbReference type="Rhea" id="RHEA-COMP:13640"/>
        <dbReference type="ChEBI" id="CHEBI:15377"/>
        <dbReference type="ChEBI" id="CHEBI:15378"/>
        <dbReference type="ChEBI" id="CHEBI:57305"/>
        <dbReference type="ChEBI" id="CHEBI:78442"/>
        <dbReference type="ChEBI" id="CHEBI:78522"/>
        <dbReference type="EC" id="3.1.1.96"/>
    </reaction>
</comment>
<comment type="catalytic activity">
    <reaction evidence="1">
        <text>D-tyrosyl-tRNA(Tyr) + H2O = D-tyrosine + tRNA(Tyr)</text>
        <dbReference type="Rhea" id="RHEA:25347"/>
        <dbReference type="Rhea" id="RHEA-COMP:9707"/>
        <dbReference type="Rhea" id="RHEA-COMP:9872"/>
        <dbReference type="ChEBI" id="CHEBI:15377"/>
        <dbReference type="ChEBI" id="CHEBI:58570"/>
        <dbReference type="ChEBI" id="CHEBI:78442"/>
        <dbReference type="ChEBI" id="CHEBI:78723"/>
    </reaction>
</comment>
<comment type="catalytic activity">
    <reaction evidence="2">
        <text>L-alanyl-tRNA(Thr) + H2O = tRNA(Thr) + L-alanine + H(+)</text>
        <dbReference type="Rhea" id="RHEA:17793"/>
        <dbReference type="Rhea" id="RHEA-COMP:9670"/>
        <dbReference type="Rhea" id="RHEA-COMP:14576"/>
        <dbReference type="ChEBI" id="CHEBI:15377"/>
        <dbReference type="ChEBI" id="CHEBI:15378"/>
        <dbReference type="ChEBI" id="CHEBI:57972"/>
        <dbReference type="ChEBI" id="CHEBI:78442"/>
        <dbReference type="ChEBI" id="CHEBI:78497"/>
    </reaction>
</comment>
<comment type="subunit">
    <text evidence="1">Homodimer.</text>
</comment>
<comment type="subcellular location">
    <subcellularLocation>
        <location evidence="4">Cytoplasm</location>
    </subcellularLocation>
</comment>
<comment type="domain">
    <text evidence="1">A Gly-transPro motif from one monomer fits into the active site of the other monomer to allow specific chiral rejection of most L-amino acids except L-Ala. The trans conformation of the motif is maintained by Arg-143.</text>
</comment>
<comment type="similarity">
    <text evidence="4">Belongs to the DTD family.</text>
</comment>
<protein>
    <recommendedName>
        <fullName evidence="4">D-aminoacyl-tRNA deacylase 2</fullName>
        <ecNumber evidence="2">3.1.1.96</ecNumber>
    </recommendedName>
    <alternativeName>
        <fullName evidence="3">Animalia-specific tRNA deacylase</fullName>
        <shortName evidence="3">ATD</shortName>
    </alternativeName>
    <alternativeName>
        <fullName evidence="4">D-tyrosyl-tRNA deacylase 2</fullName>
    </alternativeName>
    <alternativeName>
        <fullName evidence="5">L-alanyl-tRNA deacylase</fullName>
    </alternativeName>
</protein>